<gene>
    <name evidence="1" type="primary">tyrS</name>
    <name type="ordered locus">NGK_0091</name>
</gene>
<reference key="1">
    <citation type="journal article" date="2008" name="J. Bacteriol.">
        <title>Complete genome sequence of Neisseria gonorrhoeae NCCP11945.</title>
        <authorList>
            <person name="Chung G.T."/>
            <person name="Yoo J.S."/>
            <person name="Oh H.B."/>
            <person name="Lee Y.S."/>
            <person name="Cha S.H."/>
            <person name="Kim S.J."/>
            <person name="Yoo C.K."/>
        </authorList>
    </citation>
    <scope>NUCLEOTIDE SEQUENCE [LARGE SCALE GENOMIC DNA]</scope>
    <source>
        <strain>NCCP11945</strain>
    </source>
</reference>
<dbReference type="EC" id="6.1.1.1" evidence="1"/>
<dbReference type="EMBL" id="CP001050">
    <property type="protein sequence ID" value="ACF28790.1"/>
    <property type="molecule type" value="Genomic_DNA"/>
</dbReference>
<dbReference type="RefSeq" id="WP_003687313.1">
    <property type="nucleotide sequence ID" value="NC_011035.1"/>
</dbReference>
<dbReference type="PDB" id="6OTJ">
    <property type="method" value="X-ray"/>
    <property type="resolution" value="2.85 A"/>
    <property type="chains" value="A/B=1-431"/>
</dbReference>
<dbReference type="PDBsum" id="6OTJ"/>
<dbReference type="SMR" id="B4RP13"/>
<dbReference type="KEGG" id="ngk:NGK_0091"/>
<dbReference type="HOGENOM" id="CLU_024003_0_3_4"/>
<dbReference type="Proteomes" id="UP000002564">
    <property type="component" value="Chromosome"/>
</dbReference>
<dbReference type="GO" id="GO:0005829">
    <property type="term" value="C:cytosol"/>
    <property type="evidence" value="ECO:0007669"/>
    <property type="project" value="TreeGrafter"/>
</dbReference>
<dbReference type="GO" id="GO:0005524">
    <property type="term" value="F:ATP binding"/>
    <property type="evidence" value="ECO:0007669"/>
    <property type="project" value="UniProtKB-UniRule"/>
</dbReference>
<dbReference type="GO" id="GO:0003723">
    <property type="term" value="F:RNA binding"/>
    <property type="evidence" value="ECO:0007669"/>
    <property type="project" value="UniProtKB-KW"/>
</dbReference>
<dbReference type="GO" id="GO:0004831">
    <property type="term" value="F:tyrosine-tRNA ligase activity"/>
    <property type="evidence" value="ECO:0007669"/>
    <property type="project" value="UniProtKB-UniRule"/>
</dbReference>
<dbReference type="GO" id="GO:0006437">
    <property type="term" value="P:tyrosyl-tRNA aminoacylation"/>
    <property type="evidence" value="ECO:0007669"/>
    <property type="project" value="UniProtKB-UniRule"/>
</dbReference>
<dbReference type="CDD" id="cd00165">
    <property type="entry name" value="S4"/>
    <property type="match status" value="1"/>
</dbReference>
<dbReference type="CDD" id="cd00805">
    <property type="entry name" value="TyrRS_core"/>
    <property type="match status" value="1"/>
</dbReference>
<dbReference type="FunFam" id="1.10.240.10:FF:000001">
    <property type="entry name" value="Tyrosine--tRNA ligase"/>
    <property type="match status" value="1"/>
</dbReference>
<dbReference type="FunFam" id="3.10.290.10:FF:000027">
    <property type="entry name" value="Tyrosine--tRNA ligase"/>
    <property type="match status" value="1"/>
</dbReference>
<dbReference type="FunFam" id="3.40.50.620:FF:000008">
    <property type="entry name" value="Tyrosine--tRNA ligase"/>
    <property type="match status" value="1"/>
</dbReference>
<dbReference type="Gene3D" id="3.40.50.620">
    <property type="entry name" value="HUPs"/>
    <property type="match status" value="1"/>
</dbReference>
<dbReference type="Gene3D" id="3.10.290.10">
    <property type="entry name" value="RNA-binding S4 domain"/>
    <property type="match status" value="1"/>
</dbReference>
<dbReference type="Gene3D" id="1.10.240.10">
    <property type="entry name" value="Tyrosyl-Transfer RNA Synthetase"/>
    <property type="match status" value="1"/>
</dbReference>
<dbReference type="HAMAP" id="MF_02006">
    <property type="entry name" value="Tyr_tRNA_synth_type1"/>
    <property type="match status" value="1"/>
</dbReference>
<dbReference type="InterPro" id="IPR001412">
    <property type="entry name" value="aa-tRNA-synth_I_CS"/>
</dbReference>
<dbReference type="InterPro" id="IPR002305">
    <property type="entry name" value="aa-tRNA-synth_Ic"/>
</dbReference>
<dbReference type="InterPro" id="IPR014729">
    <property type="entry name" value="Rossmann-like_a/b/a_fold"/>
</dbReference>
<dbReference type="InterPro" id="IPR036986">
    <property type="entry name" value="S4_RNA-bd_sf"/>
</dbReference>
<dbReference type="InterPro" id="IPR054608">
    <property type="entry name" value="SYY-like_C"/>
</dbReference>
<dbReference type="InterPro" id="IPR002307">
    <property type="entry name" value="Tyr-tRNA-ligase"/>
</dbReference>
<dbReference type="InterPro" id="IPR024088">
    <property type="entry name" value="Tyr-tRNA-ligase_bac-type"/>
</dbReference>
<dbReference type="InterPro" id="IPR024107">
    <property type="entry name" value="Tyr-tRNA-ligase_bac_1"/>
</dbReference>
<dbReference type="NCBIfam" id="TIGR00234">
    <property type="entry name" value="tyrS"/>
    <property type="match status" value="1"/>
</dbReference>
<dbReference type="PANTHER" id="PTHR11766:SF0">
    <property type="entry name" value="TYROSINE--TRNA LIGASE, MITOCHONDRIAL"/>
    <property type="match status" value="1"/>
</dbReference>
<dbReference type="PANTHER" id="PTHR11766">
    <property type="entry name" value="TYROSYL-TRNA SYNTHETASE"/>
    <property type="match status" value="1"/>
</dbReference>
<dbReference type="Pfam" id="PF22421">
    <property type="entry name" value="SYY_C-terminal"/>
    <property type="match status" value="1"/>
</dbReference>
<dbReference type="Pfam" id="PF00579">
    <property type="entry name" value="tRNA-synt_1b"/>
    <property type="match status" value="1"/>
</dbReference>
<dbReference type="PRINTS" id="PR01040">
    <property type="entry name" value="TRNASYNTHTYR"/>
</dbReference>
<dbReference type="SUPFAM" id="SSF55174">
    <property type="entry name" value="Alpha-L RNA-binding motif"/>
    <property type="match status" value="1"/>
</dbReference>
<dbReference type="SUPFAM" id="SSF52374">
    <property type="entry name" value="Nucleotidylyl transferase"/>
    <property type="match status" value="1"/>
</dbReference>
<dbReference type="PROSITE" id="PS00178">
    <property type="entry name" value="AA_TRNA_LIGASE_I"/>
    <property type="match status" value="1"/>
</dbReference>
<dbReference type="PROSITE" id="PS50889">
    <property type="entry name" value="S4"/>
    <property type="match status" value="1"/>
</dbReference>
<evidence type="ECO:0000255" key="1">
    <source>
        <dbReference type="HAMAP-Rule" id="MF_02006"/>
    </source>
</evidence>
<evidence type="ECO:0007829" key="2">
    <source>
        <dbReference type="PDB" id="6OTJ"/>
    </source>
</evidence>
<comment type="function">
    <text evidence="1">Catalyzes the attachment of tyrosine to tRNA(Tyr) in a two-step reaction: tyrosine is first activated by ATP to form Tyr-AMP and then transferred to the acceptor end of tRNA(Tyr).</text>
</comment>
<comment type="catalytic activity">
    <reaction evidence="1">
        <text>tRNA(Tyr) + L-tyrosine + ATP = L-tyrosyl-tRNA(Tyr) + AMP + diphosphate + H(+)</text>
        <dbReference type="Rhea" id="RHEA:10220"/>
        <dbReference type="Rhea" id="RHEA-COMP:9706"/>
        <dbReference type="Rhea" id="RHEA-COMP:9707"/>
        <dbReference type="ChEBI" id="CHEBI:15378"/>
        <dbReference type="ChEBI" id="CHEBI:30616"/>
        <dbReference type="ChEBI" id="CHEBI:33019"/>
        <dbReference type="ChEBI" id="CHEBI:58315"/>
        <dbReference type="ChEBI" id="CHEBI:78442"/>
        <dbReference type="ChEBI" id="CHEBI:78536"/>
        <dbReference type="ChEBI" id="CHEBI:456215"/>
        <dbReference type="EC" id="6.1.1.1"/>
    </reaction>
</comment>
<comment type="subunit">
    <text evidence="1">Homodimer.</text>
</comment>
<comment type="subcellular location">
    <subcellularLocation>
        <location evidence="1">Cytoplasm</location>
    </subcellularLocation>
</comment>
<comment type="similarity">
    <text evidence="1">Belongs to the class-I aminoacyl-tRNA synthetase family. TyrS type 1 subfamily.</text>
</comment>
<organism>
    <name type="scientific">Neisseria gonorrhoeae (strain NCCP11945)</name>
    <dbReference type="NCBI Taxonomy" id="521006"/>
    <lineage>
        <taxon>Bacteria</taxon>
        <taxon>Pseudomonadati</taxon>
        <taxon>Pseudomonadota</taxon>
        <taxon>Betaproteobacteria</taxon>
        <taxon>Neisseriales</taxon>
        <taxon>Neisseriaceae</taxon>
        <taxon>Neisseria</taxon>
    </lineage>
</organism>
<name>SYY_NEIG2</name>
<proteinExistence type="evidence at protein level"/>
<protein>
    <recommendedName>
        <fullName evidence="1">Tyrosine--tRNA ligase</fullName>
        <ecNumber evidence="1">6.1.1.1</ecNumber>
    </recommendedName>
    <alternativeName>
        <fullName evidence="1">Tyrosyl-tRNA synthetase</fullName>
        <shortName evidence="1">TyrRS</shortName>
    </alternativeName>
</protein>
<keyword id="KW-0002">3D-structure</keyword>
<keyword id="KW-0030">Aminoacyl-tRNA synthetase</keyword>
<keyword id="KW-0067">ATP-binding</keyword>
<keyword id="KW-0963">Cytoplasm</keyword>
<keyword id="KW-0436">Ligase</keyword>
<keyword id="KW-0547">Nucleotide-binding</keyword>
<keyword id="KW-0648">Protein biosynthesis</keyword>
<keyword id="KW-0694">RNA-binding</keyword>
<sequence length="431" mass="47182">MSVIQDLQSRGLIAQTTDIEALDALLNEQKIALYCGFDPTADSLHIGHLLPVLALRRFQQAGHTPIALVGGATGMIGDPSFKAAERSLNSAETVAGWVGSIRSQLTPFLSFEGGNAAIMANNADWFGSMNCLDFLRDIGKHFSVNAMLNKESVKQRIDRDGAGISFTEFAYSLLQGYDFAELNKRHGAVLEIGGSDQWGNITAGIDLTRRLNQKQVFGLTLPLVTKSDGTKFGKTEGGAVWLNAKKTSPYQFYQFWLKVADADVYKFLKYFTFLSIEEIGVVEAKDKASGSKPEAQRILAEEMTRLIHGEEALAAAQRISESLFAEDQSRLTESDFEQLALDGLPAFEVSDGINAVEALVKTGLAASNKEARGFVNAKAVLLNGKPAEANNPNHAAERPDDAYLLIGEYKRFGKYTILRRGKRNHALLVWK</sequence>
<feature type="chain" id="PRO_1000189311" description="Tyrosine--tRNA ligase">
    <location>
        <begin position="1"/>
        <end position="431"/>
    </location>
</feature>
<feature type="domain" description="S4 RNA-binding" evidence="1">
    <location>
        <begin position="353"/>
        <end position="422"/>
    </location>
</feature>
<feature type="short sequence motif" description="'HIGH' region">
    <location>
        <begin position="39"/>
        <end position="48"/>
    </location>
</feature>
<feature type="short sequence motif" description="'KMSKS' region">
    <location>
        <begin position="231"/>
        <end position="235"/>
    </location>
</feature>
<feature type="binding site" evidence="1">
    <location>
        <position position="34"/>
    </location>
    <ligand>
        <name>L-tyrosine</name>
        <dbReference type="ChEBI" id="CHEBI:58315"/>
    </ligand>
</feature>
<feature type="binding site" evidence="1">
    <location>
        <position position="171"/>
    </location>
    <ligand>
        <name>L-tyrosine</name>
        <dbReference type="ChEBI" id="CHEBI:58315"/>
    </ligand>
</feature>
<feature type="binding site" evidence="1">
    <location>
        <position position="175"/>
    </location>
    <ligand>
        <name>L-tyrosine</name>
        <dbReference type="ChEBI" id="CHEBI:58315"/>
    </ligand>
</feature>
<feature type="binding site" evidence="1">
    <location>
        <position position="234"/>
    </location>
    <ligand>
        <name>ATP</name>
        <dbReference type="ChEBI" id="CHEBI:30616"/>
    </ligand>
</feature>
<feature type="helix" evidence="2">
    <location>
        <begin position="3"/>
        <end position="9"/>
    </location>
</feature>
<feature type="strand" evidence="2">
    <location>
        <begin position="14"/>
        <end position="17"/>
    </location>
</feature>
<feature type="helix" evidence="2">
    <location>
        <begin position="19"/>
        <end position="28"/>
    </location>
</feature>
<feature type="strand" evidence="2">
    <location>
        <begin position="32"/>
        <end position="37"/>
    </location>
</feature>
<feature type="strand" evidence="2">
    <location>
        <begin position="41"/>
        <end position="43"/>
    </location>
</feature>
<feature type="helix" evidence="2">
    <location>
        <begin position="46"/>
        <end position="48"/>
    </location>
</feature>
<feature type="helix" evidence="2">
    <location>
        <begin position="49"/>
        <end position="60"/>
    </location>
</feature>
<feature type="strand" evidence="2">
    <location>
        <begin position="64"/>
        <end position="69"/>
    </location>
</feature>
<feature type="helix" evidence="2">
    <location>
        <begin position="73"/>
        <end position="75"/>
    </location>
</feature>
<feature type="helix" evidence="2">
    <location>
        <begin position="91"/>
        <end position="105"/>
    </location>
</feature>
<feature type="helix" evidence="2">
    <location>
        <begin position="106"/>
        <end position="108"/>
    </location>
</feature>
<feature type="strand" evidence="2">
    <location>
        <begin position="118"/>
        <end position="121"/>
    </location>
</feature>
<feature type="helix" evidence="2">
    <location>
        <begin position="123"/>
        <end position="126"/>
    </location>
</feature>
<feature type="helix" evidence="2">
    <location>
        <begin position="131"/>
        <end position="137"/>
    </location>
</feature>
<feature type="helix" evidence="2">
    <location>
        <begin position="139"/>
        <end position="141"/>
    </location>
</feature>
<feature type="helix" evidence="2">
    <location>
        <begin position="144"/>
        <end position="148"/>
    </location>
</feature>
<feature type="helix" evidence="2">
    <location>
        <begin position="151"/>
        <end position="157"/>
    </location>
</feature>
<feature type="helix" evidence="2">
    <location>
        <begin position="166"/>
        <end position="169"/>
    </location>
</feature>
<feature type="helix" evidence="2">
    <location>
        <begin position="171"/>
        <end position="186"/>
    </location>
</feature>
<feature type="strand" evidence="2">
    <location>
        <begin position="188"/>
        <end position="193"/>
    </location>
</feature>
<feature type="helix" evidence="2">
    <location>
        <begin position="195"/>
        <end position="197"/>
    </location>
</feature>
<feature type="helix" evidence="2">
    <location>
        <begin position="198"/>
        <end position="212"/>
    </location>
</feature>
<feature type="strand" evidence="2">
    <location>
        <begin position="217"/>
        <end position="220"/>
    </location>
</feature>
<feature type="strand" evidence="2">
    <location>
        <begin position="241"/>
        <end position="243"/>
    </location>
</feature>
<feature type="turn" evidence="2">
    <location>
        <begin position="244"/>
        <end position="246"/>
    </location>
</feature>
<feature type="helix" evidence="2">
    <location>
        <begin position="249"/>
        <end position="257"/>
    </location>
</feature>
<feature type="helix" evidence="2">
    <location>
        <begin position="261"/>
        <end position="271"/>
    </location>
</feature>
<feature type="helix" evidence="2">
    <location>
        <begin position="276"/>
        <end position="288"/>
    </location>
</feature>
<feature type="strand" evidence="2">
    <location>
        <begin position="289"/>
        <end position="291"/>
    </location>
</feature>
<feature type="helix" evidence="2">
    <location>
        <begin position="295"/>
        <end position="308"/>
    </location>
</feature>
<feature type="helix" evidence="2">
    <location>
        <begin position="310"/>
        <end position="322"/>
    </location>
</feature>
<feature type="helix" evidence="2">
    <location>
        <begin position="333"/>
        <end position="342"/>
    </location>
</feature>
<feature type="strand" evidence="2">
    <location>
        <begin position="346"/>
        <end position="349"/>
    </location>
</feature>
<feature type="helix" evidence="2">
    <location>
        <begin position="355"/>
        <end position="361"/>
    </location>
</feature>
<feature type="helix" evidence="2">
    <location>
        <begin position="368"/>
        <end position="376"/>
    </location>
</feature>
<feature type="strand" evidence="2">
    <location>
        <begin position="380"/>
        <end position="382"/>
    </location>
</feature>
<feature type="helix" evidence="2">
    <location>
        <begin position="407"/>
        <end position="409"/>
    </location>
</feature>
<feature type="turn" evidence="2">
    <location>
        <begin position="412"/>
        <end position="414"/>
    </location>
</feature>
<feature type="strand" evidence="2">
    <location>
        <begin position="415"/>
        <end position="423"/>
    </location>
</feature>
<feature type="strand" evidence="2">
    <location>
        <begin position="425"/>
        <end position="430"/>
    </location>
</feature>
<accession>B4RP13</accession>